<evidence type="ECO:0000255" key="1">
    <source>
        <dbReference type="HAMAP-Rule" id="MF_01043"/>
    </source>
</evidence>
<keyword id="KW-1003">Cell membrane</keyword>
<keyword id="KW-0444">Lipid biosynthesis</keyword>
<keyword id="KW-0443">Lipid metabolism</keyword>
<keyword id="KW-0472">Membrane</keyword>
<keyword id="KW-0594">Phospholipid biosynthesis</keyword>
<keyword id="KW-1208">Phospholipid metabolism</keyword>
<keyword id="KW-0808">Transferase</keyword>
<keyword id="KW-0812">Transmembrane</keyword>
<keyword id="KW-1133">Transmembrane helix</keyword>
<comment type="function">
    <text evidence="1">Catalyzes the transfer of an acyl group from acyl-phosphate (acyl-PO(4)) to glycerol-3-phosphate (G3P) to form lysophosphatidic acid (LPA). This enzyme utilizes acyl-phosphate as fatty acyl donor, but not acyl-CoA or acyl-ACP.</text>
</comment>
<comment type="catalytic activity">
    <reaction evidence="1">
        <text>an acyl phosphate + sn-glycerol 3-phosphate = a 1-acyl-sn-glycero-3-phosphate + phosphate</text>
        <dbReference type="Rhea" id="RHEA:34075"/>
        <dbReference type="ChEBI" id="CHEBI:43474"/>
        <dbReference type="ChEBI" id="CHEBI:57597"/>
        <dbReference type="ChEBI" id="CHEBI:57970"/>
        <dbReference type="ChEBI" id="CHEBI:59918"/>
        <dbReference type="EC" id="2.3.1.275"/>
    </reaction>
</comment>
<comment type="pathway">
    <text evidence="1">Lipid metabolism; phospholipid metabolism.</text>
</comment>
<comment type="subunit">
    <text evidence="1">Probably interacts with PlsX.</text>
</comment>
<comment type="subcellular location">
    <subcellularLocation>
        <location evidence="1">Cell membrane</location>
        <topology evidence="1">Multi-pass membrane protein</topology>
    </subcellularLocation>
</comment>
<comment type="similarity">
    <text evidence="1">Belongs to the PlsY family.</text>
</comment>
<dbReference type="EC" id="2.3.1.275" evidence="1"/>
<dbReference type="EMBL" id="CP000027">
    <property type="protein sequence ID" value="AAW39109.1"/>
    <property type="molecule type" value="Genomic_DNA"/>
</dbReference>
<dbReference type="RefSeq" id="WP_010937282.1">
    <property type="nucleotide sequence ID" value="NC_002936.3"/>
</dbReference>
<dbReference type="SMR" id="Q3Z643"/>
<dbReference type="STRING" id="243164.DET1611"/>
<dbReference type="GeneID" id="3229066"/>
<dbReference type="KEGG" id="det:DET1611"/>
<dbReference type="PATRIC" id="fig|243164.10.peg.1521"/>
<dbReference type="eggNOG" id="COG0344">
    <property type="taxonomic scope" value="Bacteria"/>
</dbReference>
<dbReference type="HOGENOM" id="CLU_081254_7_1_0"/>
<dbReference type="InParanoid" id="Q3Z643"/>
<dbReference type="UniPathway" id="UPA00085"/>
<dbReference type="Proteomes" id="UP000008289">
    <property type="component" value="Chromosome"/>
</dbReference>
<dbReference type="GO" id="GO:0005886">
    <property type="term" value="C:plasma membrane"/>
    <property type="evidence" value="ECO:0007669"/>
    <property type="project" value="UniProtKB-SubCell"/>
</dbReference>
<dbReference type="GO" id="GO:0043772">
    <property type="term" value="F:acyl-phosphate glycerol-3-phosphate acyltransferase activity"/>
    <property type="evidence" value="ECO:0007669"/>
    <property type="project" value="UniProtKB-UniRule"/>
</dbReference>
<dbReference type="GO" id="GO:0008654">
    <property type="term" value="P:phospholipid biosynthetic process"/>
    <property type="evidence" value="ECO:0007669"/>
    <property type="project" value="UniProtKB-UniRule"/>
</dbReference>
<dbReference type="HAMAP" id="MF_01043">
    <property type="entry name" value="PlsY"/>
    <property type="match status" value="1"/>
</dbReference>
<dbReference type="InterPro" id="IPR003811">
    <property type="entry name" value="G3P_acylTferase_PlsY"/>
</dbReference>
<dbReference type="NCBIfam" id="NF010993">
    <property type="entry name" value="PRK14417.1"/>
    <property type="match status" value="1"/>
</dbReference>
<dbReference type="PANTHER" id="PTHR30309:SF0">
    <property type="entry name" value="GLYCEROL-3-PHOSPHATE ACYLTRANSFERASE-RELATED"/>
    <property type="match status" value="1"/>
</dbReference>
<dbReference type="PANTHER" id="PTHR30309">
    <property type="entry name" value="INNER MEMBRANE PROTEIN YGIH"/>
    <property type="match status" value="1"/>
</dbReference>
<dbReference type="Pfam" id="PF02660">
    <property type="entry name" value="G3P_acyltransf"/>
    <property type="match status" value="1"/>
</dbReference>
<dbReference type="SMART" id="SM01207">
    <property type="entry name" value="G3P_acyltransf"/>
    <property type="match status" value="1"/>
</dbReference>
<reference key="1">
    <citation type="journal article" date="2005" name="Science">
        <title>Genome sequence of the PCE-dechlorinating bacterium Dehalococcoides ethenogenes.</title>
        <authorList>
            <person name="Seshadri R."/>
            <person name="Adrian L."/>
            <person name="Fouts D.E."/>
            <person name="Eisen J.A."/>
            <person name="Phillippy A.M."/>
            <person name="Methe B.A."/>
            <person name="Ward N.L."/>
            <person name="Nelson W.C."/>
            <person name="DeBoy R.T."/>
            <person name="Khouri H.M."/>
            <person name="Kolonay J.F."/>
            <person name="Dodson R.J."/>
            <person name="Daugherty S.C."/>
            <person name="Brinkac L.M."/>
            <person name="Sullivan S.A."/>
            <person name="Madupu R."/>
            <person name="Nelson K.E."/>
            <person name="Kang K.H."/>
            <person name="Impraim M."/>
            <person name="Tran K."/>
            <person name="Robinson J.M."/>
            <person name="Forberger H.A."/>
            <person name="Fraser C.M."/>
            <person name="Zinder S.H."/>
            <person name="Heidelberg J.F."/>
        </authorList>
    </citation>
    <scope>NUCLEOTIDE SEQUENCE [LARGE SCALE GENOMIC DNA]</scope>
    <source>
        <strain>ATCC BAA-2266 / KCTC 15142 / 195</strain>
    </source>
</reference>
<gene>
    <name evidence="1" type="primary">plsY5</name>
    <name type="ordered locus">DET1611</name>
</gene>
<accession>Q3Z643</accession>
<feature type="chain" id="PRO_0000188353" description="Glycerol-3-phosphate acyltransferase 5">
    <location>
        <begin position="1"/>
        <end position="233"/>
    </location>
</feature>
<feature type="transmembrane region" description="Helical" evidence="1">
    <location>
        <begin position="3"/>
        <end position="23"/>
    </location>
</feature>
<feature type="transmembrane region" description="Helical" evidence="1">
    <location>
        <begin position="69"/>
        <end position="89"/>
    </location>
</feature>
<feature type="transmembrane region" description="Helical" evidence="1">
    <location>
        <begin position="116"/>
        <end position="136"/>
    </location>
</feature>
<feature type="transmembrane region" description="Helical" evidence="1">
    <location>
        <begin position="143"/>
        <end position="163"/>
    </location>
</feature>
<feature type="transmembrane region" description="Helical" evidence="1">
    <location>
        <begin position="168"/>
        <end position="188"/>
    </location>
</feature>
<proteinExistence type="inferred from homology"/>
<sequence>MSLVFIIMAIAGYLVGAIPMAYLLSRWRRGIDIRRYGSGNVGASNVVKTAGKRLGLAVFIFDVSKGAVMILLSGALGLALWQQIVVGLFTIAGHNWPVFLRFNGGRGIATSLGVALVMAPVPALIALGTAIAFGLFKKMAPGVFLGVAALPFMSGYFHGFFGIREYQTISWGFIGIFLIMVTRRLMAPDNEYAHTVSKAELIFNRMFLDRDIRSRSVWINRNSAPAEESPNIL</sequence>
<organism>
    <name type="scientific">Dehalococcoides mccartyi (strain ATCC BAA-2266 / KCTC 15142 / 195)</name>
    <name type="common">Dehalococcoides ethenogenes (strain 195)</name>
    <dbReference type="NCBI Taxonomy" id="243164"/>
    <lineage>
        <taxon>Bacteria</taxon>
        <taxon>Bacillati</taxon>
        <taxon>Chloroflexota</taxon>
        <taxon>Dehalococcoidia</taxon>
        <taxon>Dehalococcoidales</taxon>
        <taxon>Dehalococcoidaceae</taxon>
        <taxon>Dehalococcoides</taxon>
    </lineage>
</organism>
<protein>
    <recommendedName>
        <fullName evidence="1">Glycerol-3-phosphate acyltransferase 5</fullName>
    </recommendedName>
    <alternativeName>
        <fullName evidence="1">Acyl-PO4 G3P acyltransferase 5</fullName>
    </alternativeName>
    <alternativeName>
        <fullName evidence="1">Acyl-phosphate--glycerol-3-phosphate acyltransferase 5</fullName>
    </alternativeName>
    <alternativeName>
        <fullName evidence="1">G3P acyltransferase 5</fullName>
        <shortName evidence="1">GPAT 5</shortName>
        <ecNumber evidence="1">2.3.1.275</ecNumber>
    </alternativeName>
    <alternativeName>
        <fullName evidence="1">Lysophosphatidic acid synthase 5</fullName>
        <shortName evidence="1">LPA synthase 5</shortName>
    </alternativeName>
</protein>
<name>PLSY5_DEHM1</name>